<keyword id="KW-1064">Adaptive immunity</keyword>
<keyword id="KW-1015">Disulfide bond</keyword>
<keyword id="KW-0325">Glycoprotein</keyword>
<keyword id="KW-0391">Immunity</keyword>
<keyword id="KW-0393">Immunoglobulin domain</keyword>
<keyword id="KW-0449">Lipoprotein</keyword>
<keyword id="KW-0472">Membrane</keyword>
<keyword id="KW-0564">Palmitate</keyword>
<keyword id="KW-0675">Receptor</keyword>
<keyword id="KW-1185">Reference proteome</keyword>
<keyword id="KW-0732">Signal</keyword>
<keyword id="KW-0812">Transmembrane</keyword>
<keyword id="KW-1133">Transmembrane helix</keyword>
<name>CD7_MOUSE</name>
<evidence type="ECO:0000250" key="1"/>
<evidence type="ECO:0000250" key="2">
    <source>
        <dbReference type="UniProtKB" id="P09564"/>
    </source>
</evidence>
<evidence type="ECO:0000255" key="3"/>
<evidence type="ECO:0000255" key="4">
    <source>
        <dbReference type="PROSITE-ProRule" id="PRU00114"/>
    </source>
</evidence>
<evidence type="ECO:0000269" key="5">
    <source>
    </source>
</evidence>
<evidence type="ECO:0000269" key="6">
    <source>
    </source>
</evidence>
<evidence type="ECO:0000269" key="7">
    <source>
    </source>
</evidence>
<evidence type="ECO:0000305" key="8"/>
<comment type="function">
    <text evidence="2">Transmembrane glycoprotein expressed by T-cells and natural killer (NK) cells and their precursors. Plays a costimulatory role in T-cell activation upon binding to its ligand K12/SECTM1. In turn, mediates the production of cytokines such as IL-2. On resting NK-cells, CD7 activation results in a significant induction of gamma-interferon levels.</text>
</comment>
<comment type="subunit">
    <text evidence="6">Interacts with SECTM1.</text>
</comment>
<comment type="subcellular location">
    <subcellularLocation>
        <location>Membrane</location>
        <topology>Single-pass type I membrane protein</topology>
    </subcellularLocation>
</comment>
<comment type="disruption phenotype">
    <text evidence="5 7">CD7-deficient mice are viable, have normal peripheral blood and spleen lymphocyte numbers, and have normal specific antibody responses with antibody-driven Ig isotype switching. Deletion of CD7 in T-cell progenitors permits normal T-cell development and homeostasis and only minor alterations in T-cell effector function (PubMed:9637484). Micece are resistant to death in both the high-dose and the low-dose LPS-induced models of shock associated with a low number of resident effector NK1.11/CD3 T-cells in liver (PubMed:10075985).</text>
</comment>
<gene>
    <name type="primary">Cd7</name>
</gene>
<sequence length="210" mass="23153">MTQQAVLALLLTLAGILPGPLDAQDVHQSPRLTIASEGDSVNITCSTRGHLEGILMKKIWPQAYNVIYFEDRQEPTVDRTFSGRINFSGSQKNLTITISSLQLADTGDYTCEAVRKVSARGLFTTVVVKEKSSQEAYRSQEPLQTSFSFPAAIAVGFFFTGLLLGVVCSMLRKIQIKKLCASGIKESPCVVYEDMSYSNRKTPCIPNQYQ</sequence>
<dbReference type="EMBL" id="D10329">
    <property type="protein sequence ID" value="BAA01171.1"/>
    <property type="molecule type" value="mRNA"/>
</dbReference>
<dbReference type="EMBL" id="U23462">
    <property type="protein sequence ID" value="AAB17482.1"/>
    <property type="molecule type" value="Genomic_DNA"/>
</dbReference>
<dbReference type="EMBL" id="D31956">
    <property type="protein sequence ID" value="BAA06728.1"/>
    <property type="molecule type" value="Genomic_DNA"/>
</dbReference>
<dbReference type="CCDS" id="CCDS25764.1"/>
<dbReference type="PIR" id="I49294">
    <property type="entry name" value="I49294"/>
</dbReference>
<dbReference type="RefSeq" id="NP_033984.1">
    <property type="nucleotide sequence ID" value="NM_009854.2"/>
</dbReference>
<dbReference type="SMR" id="P50283"/>
<dbReference type="BioGRID" id="198609">
    <property type="interactions" value="1"/>
</dbReference>
<dbReference type="FunCoup" id="P50283">
    <property type="interactions" value="421"/>
</dbReference>
<dbReference type="STRING" id="10090.ENSMUSP00000026159"/>
<dbReference type="GlyCosmos" id="P50283">
    <property type="glycosylation" value="3 sites, No reported glycans"/>
</dbReference>
<dbReference type="GlyGen" id="P50283">
    <property type="glycosylation" value="3 sites"/>
</dbReference>
<dbReference type="iPTMnet" id="P50283"/>
<dbReference type="PhosphoSitePlus" id="P50283"/>
<dbReference type="PaxDb" id="10090-ENSMUSP00000026159"/>
<dbReference type="ProteomicsDB" id="265627"/>
<dbReference type="ABCD" id="P50283">
    <property type="antibodies" value="17 sequenced antibodies"/>
</dbReference>
<dbReference type="Antibodypedia" id="3610">
    <property type="antibodies" value="2129 antibodies from 52 providers"/>
</dbReference>
<dbReference type="DNASU" id="12516"/>
<dbReference type="Ensembl" id="ENSMUST00000026159.6">
    <property type="protein sequence ID" value="ENSMUSP00000026159.6"/>
    <property type="gene ID" value="ENSMUSG00000025163.7"/>
</dbReference>
<dbReference type="GeneID" id="12516"/>
<dbReference type="KEGG" id="mmu:12516"/>
<dbReference type="UCSC" id="uc007mvc.2">
    <property type="organism name" value="mouse"/>
</dbReference>
<dbReference type="AGR" id="MGI:88344"/>
<dbReference type="CTD" id="924"/>
<dbReference type="MGI" id="MGI:88344">
    <property type="gene designation" value="Cd7"/>
</dbReference>
<dbReference type="VEuPathDB" id="HostDB:ENSMUSG00000025163"/>
<dbReference type="eggNOG" id="ENOG502SD5I">
    <property type="taxonomic scope" value="Eukaryota"/>
</dbReference>
<dbReference type="GeneTree" id="ENSGT00390000013965"/>
<dbReference type="HOGENOM" id="CLU_115462_0_0_1"/>
<dbReference type="InParanoid" id="P50283"/>
<dbReference type="OMA" id="SACVVYE"/>
<dbReference type="OrthoDB" id="9899013at2759"/>
<dbReference type="PhylomeDB" id="P50283"/>
<dbReference type="TreeFam" id="TF338565"/>
<dbReference type="BioGRID-ORCS" id="12516">
    <property type="hits" value="3 hits in 80 CRISPR screens"/>
</dbReference>
<dbReference type="PRO" id="PR:P50283"/>
<dbReference type="Proteomes" id="UP000000589">
    <property type="component" value="Chromosome 11"/>
</dbReference>
<dbReference type="RNAct" id="P50283">
    <property type="molecule type" value="protein"/>
</dbReference>
<dbReference type="Bgee" id="ENSMUSG00000025163">
    <property type="expression patterns" value="Expressed in animal zygote and 53 other cell types or tissues"/>
</dbReference>
<dbReference type="ExpressionAtlas" id="P50283">
    <property type="expression patterns" value="baseline and differential"/>
</dbReference>
<dbReference type="GO" id="GO:0016020">
    <property type="term" value="C:membrane"/>
    <property type="evidence" value="ECO:0007669"/>
    <property type="project" value="UniProtKB-SubCell"/>
</dbReference>
<dbReference type="GO" id="GO:0038023">
    <property type="term" value="F:signaling receptor activity"/>
    <property type="evidence" value="ECO:0007669"/>
    <property type="project" value="InterPro"/>
</dbReference>
<dbReference type="GO" id="GO:0002250">
    <property type="term" value="P:adaptive immune response"/>
    <property type="evidence" value="ECO:0007669"/>
    <property type="project" value="UniProtKB-KW"/>
</dbReference>
<dbReference type="GO" id="GO:0048873">
    <property type="term" value="P:homeostasis of number of cells within a tissue"/>
    <property type="evidence" value="ECO:0000315"/>
    <property type="project" value="MGI"/>
</dbReference>
<dbReference type="FunFam" id="2.60.40.10:FF:002197">
    <property type="entry name" value="T-cell antigen CD7"/>
    <property type="match status" value="1"/>
</dbReference>
<dbReference type="Gene3D" id="2.60.40.10">
    <property type="entry name" value="Immunoglobulins"/>
    <property type="match status" value="1"/>
</dbReference>
<dbReference type="InterPro" id="IPR039090">
    <property type="entry name" value="CD7"/>
</dbReference>
<dbReference type="InterPro" id="IPR007110">
    <property type="entry name" value="Ig-like_dom"/>
</dbReference>
<dbReference type="InterPro" id="IPR036179">
    <property type="entry name" value="Ig-like_dom_sf"/>
</dbReference>
<dbReference type="InterPro" id="IPR013783">
    <property type="entry name" value="Ig-like_fold"/>
</dbReference>
<dbReference type="InterPro" id="IPR003599">
    <property type="entry name" value="Ig_sub"/>
</dbReference>
<dbReference type="InterPro" id="IPR013106">
    <property type="entry name" value="Ig_V-set"/>
</dbReference>
<dbReference type="PANTHER" id="PTHR15343">
    <property type="entry name" value="CD7"/>
    <property type="match status" value="1"/>
</dbReference>
<dbReference type="PANTHER" id="PTHR15343:SF0">
    <property type="entry name" value="T-CELL ANTIGEN CD7"/>
    <property type="match status" value="1"/>
</dbReference>
<dbReference type="Pfam" id="PF07686">
    <property type="entry name" value="V-set"/>
    <property type="match status" value="1"/>
</dbReference>
<dbReference type="SMART" id="SM00409">
    <property type="entry name" value="IG"/>
    <property type="match status" value="1"/>
</dbReference>
<dbReference type="SMART" id="SM00406">
    <property type="entry name" value="IGv"/>
    <property type="match status" value="1"/>
</dbReference>
<dbReference type="SUPFAM" id="SSF48726">
    <property type="entry name" value="Immunoglobulin"/>
    <property type="match status" value="1"/>
</dbReference>
<dbReference type="PROSITE" id="PS50835">
    <property type="entry name" value="IG_LIKE"/>
    <property type="match status" value="1"/>
</dbReference>
<reference key="1">
    <citation type="journal article" date="1993" name="Immunogenetics">
        <title>Isolation and characterization of mouse CD7 cDNA.</title>
        <authorList>
            <person name="Yoshikawa K."/>
            <person name="Seto M."/>
            <person name="Ueda R."/>
            <person name="Obata Y."/>
            <person name="Fukatsu H."/>
            <person name="Segawa A."/>
            <person name="Takahashi T."/>
        </authorList>
    </citation>
    <scope>NUCLEOTIDE SEQUENCE [MRNA]</scope>
</reference>
<reference key="2">
    <citation type="journal article" date="1994" name="Immunogenetics">
        <title>Mouse Cd7 maps to chromosome 11.</title>
        <authorList>
            <person name="Lee D.M."/>
            <person name="Watson M.L."/>
            <person name="Seldin M.F."/>
        </authorList>
    </citation>
    <scope>NUCLEOTIDE SEQUENCE [GENOMIC DNA]</scope>
    <source>
        <strain>129</strain>
    </source>
</reference>
<reference key="3">
    <citation type="journal article" date="1995" name="Immunogenetics">
        <title>Molecular cloning of the gene coding for the mouse T-cell antigen CD7.</title>
        <authorList>
            <person name="Yoshikawa K."/>
            <person name="Seto M."/>
            <person name="Ueda R."/>
            <person name="Obata Y."/>
            <person name="Aoki S."/>
            <person name="Takahashi T."/>
        </authorList>
    </citation>
    <scope>NUCLEOTIDE SEQUENCE [GENOMIC DNA] OF 1-24 AND 176-210</scope>
    <source>
        <strain>BALB/cJ</strain>
        <tissue>Spleen</tissue>
    </source>
</reference>
<reference key="4">
    <citation type="journal article" date="1998" name="J. Immunol.">
        <title>Immunologic characterization of CD7-deficient mice.</title>
        <authorList>
            <person name="Lee D.M."/>
            <person name="Staats H.F."/>
            <person name="Sundy J.S."/>
            <person name="Patel D.D."/>
            <person name="Sempowski G.D."/>
            <person name="Scearce R.M."/>
            <person name="Jones D.M."/>
            <person name="Haynes B.F."/>
        </authorList>
    </citation>
    <scope>DISRUPTION PHENOTYPE</scope>
</reference>
<reference key="5">
    <citation type="journal article" date="1999" name="J. Exp. Med.">
        <title>Resistance of CD7-deficient mice to lipopolysaccharide-induced shock syndromes.</title>
        <authorList>
            <person name="Sempowski G.D."/>
            <person name="Lee D.M."/>
            <person name="Scearce R.M."/>
            <person name="Patel D.D."/>
            <person name="Haynes B.F."/>
        </authorList>
    </citation>
    <scope>DISRUPTION PHENOTYPE</scope>
</reference>
<reference key="6">
    <citation type="journal article" date="2000" name="J. Biol. Chem.">
        <title>Identification of CD7 as a cognate of the human K12 (SECTM1) protein.</title>
        <authorList>
            <person name="Lyman S.D."/>
            <person name="Escobar S."/>
            <person name="Rousseau A.-M."/>
            <person name="Armstrong A."/>
            <person name="Fanslow W.C."/>
        </authorList>
    </citation>
    <scope>INTERACTION WITH SECTM1</scope>
</reference>
<accession>P50283</accession>
<proteinExistence type="evidence at protein level"/>
<protein>
    <recommendedName>
        <fullName>T-cell antigen CD7</fullName>
    </recommendedName>
    <cdAntigenName>CD7</cdAntigenName>
</protein>
<feature type="signal peptide" evidence="3">
    <location>
        <begin position="1"/>
        <end position="23"/>
    </location>
</feature>
<feature type="chain" id="PRO_0000014634" description="T-cell antigen CD7">
    <location>
        <begin position="24"/>
        <end position="210"/>
    </location>
</feature>
<feature type="topological domain" description="Extracellular" evidence="3">
    <location>
        <begin position="24"/>
        <end position="150"/>
    </location>
</feature>
<feature type="transmembrane region" description="Helical" evidence="3">
    <location>
        <begin position="151"/>
        <end position="171"/>
    </location>
</feature>
<feature type="topological domain" description="Cytoplasmic" evidence="3">
    <location>
        <begin position="172"/>
        <end position="210"/>
    </location>
</feature>
<feature type="domain" description="Ig-like">
    <location>
        <begin position="24"/>
        <end position="129"/>
    </location>
</feature>
<feature type="lipid moiety-binding region" description="S-palmitoyl cysteine" evidence="1">
    <location>
        <position position="168"/>
    </location>
</feature>
<feature type="glycosylation site" description="N-linked (GlcNAc...) asparagine" evidence="3">
    <location>
        <position position="42"/>
    </location>
</feature>
<feature type="glycosylation site" description="N-linked (GlcNAc...) asparagine" evidence="3">
    <location>
        <position position="86"/>
    </location>
</feature>
<feature type="glycosylation site" description="N-linked (GlcNAc...) asparagine" evidence="3">
    <location>
        <position position="93"/>
    </location>
</feature>
<feature type="disulfide bond" evidence="4">
    <location>
        <begin position="45"/>
        <end position="111"/>
    </location>
</feature>
<feature type="sequence conflict" description="In Ref. 2; AAB17482." evidence="8" ref="2">
    <original>F</original>
    <variation>L</variation>
    <location>
        <position position="69"/>
    </location>
</feature>
<organism>
    <name type="scientific">Mus musculus</name>
    <name type="common">Mouse</name>
    <dbReference type="NCBI Taxonomy" id="10090"/>
    <lineage>
        <taxon>Eukaryota</taxon>
        <taxon>Metazoa</taxon>
        <taxon>Chordata</taxon>
        <taxon>Craniata</taxon>
        <taxon>Vertebrata</taxon>
        <taxon>Euteleostomi</taxon>
        <taxon>Mammalia</taxon>
        <taxon>Eutheria</taxon>
        <taxon>Euarchontoglires</taxon>
        <taxon>Glires</taxon>
        <taxon>Rodentia</taxon>
        <taxon>Myomorpha</taxon>
        <taxon>Muroidea</taxon>
        <taxon>Muridae</taxon>
        <taxon>Murinae</taxon>
        <taxon>Mus</taxon>
        <taxon>Mus</taxon>
    </lineage>
</organism>